<accession>B6EMP9</accession>
<gene>
    <name evidence="1" type="primary">nsrR</name>
    <name type="ordered locus">VSAL_I2769</name>
</gene>
<name>NSRR_ALISL</name>
<feature type="chain" id="PRO_1000138114" description="HTH-type transcriptional repressor NsrR">
    <location>
        <begin position="1"/>
        <end position="141"/>
    </location>
</feature>
<feature type="domain" description="HTH rrf2-type" evidence="1">
    <location>
        <begin position="2"/>
        <end position="129"/>
    </location>
</feature>
<feature type="DNA-binding region" description="H-T-H motif" evidence="1">
    <location>
        <begin position="28"/>
        <end position="51"/>
    </location>
</feature>
<feature type="binding site" evidence="1">
    <location>
        <position position="91"/>
    </location>
    <ligand>
        <name>[2Fe-2S] cluster</name>
        <dbReference type="ChEBI" id="CHEBI:190135"/>
    </ligand>
</feature>
<feature type="binding site" evidence="1">
    <location>
        <position position="96"/>
    </location>
    <ligand>
        <name>[2Fe-2S] cluster</name>
        <dbReference type="ChEBI" id="CHEBI:190135"/>
    </ligand>
</feature>
<feature type="binding site" evidence="1">
    <location>
        <position position="102"/>
    </location>
    <ligand>
        <name>[2Fe-2S] cluster</name>
        <dbReference type="ChEBI" id="CHEBI:190135"/>
    </ligand>
</feature>
<protein>
    <recommendedName>
        <fullName evidence="1">HTH-type transcriptional repressor NsrR</fullName>
    </recommendedName>
</protein>
<evidence type="ECO:0000255" key="1">
    <source>
        <dbReference type="HAMAP-Rule" id="MF_01177"/>
    </source>
</evidence>
<comment type="function">
    <text evidence="1">Nitric oxide-sensitive repressor of genes involved in protecting the cell against nitrosative stress. May require iron for activity.</text>
</comment>
<comment type="cofactor">
    <cofactor evidence="1">
        <name>[2Fe-2S] cluster</name>
        <dbReference type="ChEBI" id="CHEBI:190135"/>
    </cofactor>
    <text evidence="1">Binds 1 [2Fe-2S] cluster per subunit.</text>
</comment>
<reference key="1">
    <citation type="journal article" date="2008" name="BMC Genomics">
        <title>The genome sequence of the fish pathogen Aliivibrio salmonicida strain LFI1238 shows extensive evidence of gene decay.</title>
        <authorList>
            <person name="Hjerde E."/>
            <person name="Lorentzen M.S."/>
            <person name="Holden M.T."/>
            <person name="Seeger K."/>
            <person name="Paulsen S."/>
            <person name="Bason N."/>
            <person name="Churcher C."/>
            <person name="Harris D."/>
            <person name="Norbertczak H."/>
            <person name="Quail M.A."/>
            <person name="Sanders S."/>
            <person name="Thurston S."/>
            <person name="Parkhill J."/>
            <person name="Willassen N.P."/>
            <person name="Thomson N.R."/>
        </authorList>
    </citation>
    <scope>NUCLEOTIDE SEQUENCE [LARGE SCALE GENOMIC DNA]</scope>
    <source>
        <strain>LFI1238</strain>
    </source>
</reference>
<organism>
    <name type="scientific">Aliivibrio salmonicida (strain LFI1238)</name>
    <name type="common">Vibrio salmonicida (strain LFI1238)</name>
    <dbReference type="NCBI Taxonomy" id="316275"/>
    <lineage>
        <taxon>Bacteria</taxon>
        <taxon>Pseudomonadati</taxon>
        <taxon>Pseudomonadota</taxon>
        <taxon>Gammaproteobacteria</taxon>
        <taxon>Vibrionales</taxon>
        <taxon>Vibrionaceae</taxon>
        <taxon>Aliivibrio</taxon>
    </lineage>
</organism>
<dbReference type="EMBL" id="FM178379">
    <property type="protein sequence ID" value="CAQ80453.1"/>
    <property type="molecule type" value="Genomic_DNA"/>
</dbReference>
<dbReference type="RefSeq" id="WP_012551205.1">
    <property type="nucleotide sequence ID" value="NC_011312.1"/>
</dbReference>
<dbReference type="SMR" id="B6EMP9"/>
<dbReference type="KEGG" id="vsa:VSAL_I2769"/>
<dbReference type="eggNOG" id="COG1959">
    <property type="taxonomic scope" value="Bacteria"/>
</dbReference>
<dbReference type="HOGENOM" id="CLU_107144_2_1_6"/>
<dbReference type="Proteomes" id="UP000001730">
    <property type="component" value="Chromosome 1"/>
</dbReference>
<dbReference type="GO" id="GO:0005829">
    <property type="term" value="C:cytosol"/>
    <property type="evidence" value="ECO:0007669"/>
    <property type="project" value="TreeGrafter"/>
</dbReference>
<dbReference type="GO" id="GO:0051537">
    <property type="term" value="F:2 iron, 2 sulfur cluster binding"/>
    <property type="evidence" value="ECO:0007669"/>
    <property type="project" value="UniProtKB-KW"/>
</dbReference>
<dbReference type="GO" id="GO:0003700">
    <property type="term" value="F:DNA-binding transcription factor activity"/>
    <property type="evidence" value="ECO:0007669"/>
    <property type="project" value="UniProtKB-UniRule"/>
</dbReference>
<dbReference type="GO" id="GO:0003690">
    <property type="term" value="F:double-stranded DNA binding"/>
    <property type="evidence" value="ECO:0007669"/>
    <property type="project" value="UniProtKB-UniRule"/>
</dbReference>
<dbReference type="GO" id="GO:0005506">
    <property type="term" value="F:iron ion binding"/>
    <property type="evidence" value="ECO:0007669"/>
    <property type="project" value="UniProtKB-UniRule"/>
</dbReference>
<dbReference type="GO" id="GO:0045892">
    <property type="term" value="P:negative regulation of DNA-templated transcription"/>
    <property type="evidence" value="ECO:0007669"/>
    <property type="project" value="InterPro"/>
</dbReference>
<dbReference type="FunFam" id="1.10.10.10:FF:000105">
    <property type="entry name" value="HTH-type transcriptional repressor NsrR"/>
    <property type="match status" value="1"/>
</dbReference>
<dbReference type="Gene3D" id="1.10.10.10">
    <property type="entry name" value="Winged helix-like DNA-binding domain superfamily/Winged helix DNA-binding domain"/>
    <property type="match status" value="1"/>
</dbReference>
<dbReference type="HAMAP" id="MF_01177">
    <property type="entry name" value="HTH_type_NsrR"/>
    <property type="match status" value="1"/>
</dbReference>
<dbReference type="InterPro" id="IPR000944">
    <property type="entry name" value="Tscrpt_reg_Rrf2"/>
</dbReference>
<dbReference type="InterPro" id="IPR023761">
    <property type="entry name" value="Tscrpt_rep_HTH_NsrR"/>
</dbReference>
<dbReference type="InterPro" id="IPR036388">
    <property type="entry name" value="WH-like_DNA-bd_sf"/>
</dbReference>
<dbReference type="InterPro" id="IPR036390">
    <property type="entry name" value="WH_DNA-bd_sf"/>
</dbReference>
<dbReference type="NCBIfam" id="NF008240">
    <property type="entry name" value="PRK11014.1"/>
    <property type="match status" value="1"/>
</dbReference>
<dbReference type="NCBIfam" id="TIGR00738">
    <property type="entry name" value="rrf2_super"/>
    <property type="match status" value="1"/>
</dbReference>
<dbReference type="PANTHER" id="PTHR33221:SF4">
    <property type="entry name" value="HTH-TYPE TRANSCRIPTIONAL REPRESSOR NSRR"/>
    <property type="match status" value="1"/>
</dbReference>
<dbReference type="PANTHER" id="PTHR33221">
    <property type="entry name" value="WINGED HELIX-TURN-HELIX TRANSCRIPTIONAL REGULATOR, RRF2 FAMILY"/>
    <property type="match status" value="1"/>
</dbReference>
<dbReference type="Pfam" id="PF02082">
    <property type="entry name" value="Rrf2"/>
    <property type="match status" value="1"/>
</dbReference>
<dbReference type="SUPFAM" id="SSF46785">
    <property type="entry name" value="Winged helix' DNA-binding domain"/>
    <property type="match status" value="1"/>
</dbReference>
<dbReference type="PROSITE" id="PS51197">
    <property type="entry name" value="HTH_RRF2_2"/>
    <property type="match status" value="1"/>
</dbReference>
<keyword id="KW-0001">2Fe-2S</keyword>
<keyword id="KW-0238">DNA-binding</keyword>
<keyword id="KW-0408">Iron</keyword>
<keyword id="KW-0411">Iron-sulfur</keyword>
<keyword id="KW-0479">Metal-binding</keyword>
<keyword id="KW-0678">Repressor</keyword>
<keyword id="KW-0804">Transcription</keyword>
<keyword id="KW-0805">Transcription regulation</keyword>
<proteinExistence type="inferred from homology"/>
<sequence length="141" mass="15723">MQLTNFTDFGLRALIYLASLPKGELTSITVVTETFDVSRNHMVKIINKLGQEGFIKTVRGKNGGICLGRPADQIIIGEVIRSIEPFNIVNCAPEFCHITPACRLKTALAKAKQAFLDELDQHTIQDMLTENNELLILLKRV</sequence>